<name>TYW1B_HUMAN</name>
<proteinExistence type="evidence at protein level"/>
<reference key="1">
    <citation type="journal article" date="2004" name="Nat. Genet.">
        <title>Complete sequencing and characterization of 21,243 full-length human cDNAs.</title>
        <authorList>
            <person name="Ota T."/>
            <person name="Suzuki Y."/>
            <person name="Nishikawa T."/>
            <person name="Otsuki T."/>
            <person name="Sugiyama T."/>
            <person name="Irie R."/>
            <person name="Wakamatsu A."/>
            <person name="Hayashi K."/>
            <person name="Sato H."/>
            <person name="Nagai K."/>
            <person name="Kimura K."/>
            <person name="Makita H."/>
            <person name="Sekine M."/>
            <person name="Obayashi M."/>
            <person name="Nishi T."/>
            <person name="Shibahara T."/>
            <person name="Tanaka T."/>
            <person name="Ishii S."/>
            <person name="Yamamoto J."/>
            <person name="Saito K."/>
            <person name="Kawai Y."/>
            <person name="Isono Y."/>
            <person name="Nakamura Y."/>
            <person name="Nagahari K."/>
            <person name="Murakami K."/>
            <person name="Yasuda T."/>
            <person name="Iwayanagi T."/>
            <person name="Wagatsuma M."/>
            <person name="Shiratori A."/>
            <person name="Sudo H."/>
            <person name="Hosoiri T."/>
            <person name="Kaku Y."/>
            <person name="Kodaira H."/>
            <person name="Kondo H."/>
            <person name="Sugawara M."/>
            <person name="Takahashi M."/>
            <person name="Kanda K."/>
            <person name="Yokoi T."/>
            <person name="Furuya T."/>
            <person name="Kikkawa E."/>
            <person name="Omura Y."/>
            <person name="Abe K."/>
            <person name="Kamihara K."/>
            <person name="Katsuta N."/>
            <person name="Sato K."/>
            <person name="Tanikawa M."/>
            <person name="Yamazaki M."/>
            <person name="Ninomiya K."/>
            <person name="Ishibashi T."/>
            <person name="Yamashita H."/>
            <person name="Murakawa K."/>
            <person name="Fujimori K."/>
            <person name="Tanai H."/>
            <person name="Kimata M."/>
            <person name="Watanabe M."/>
            <person name="Hiraoka S."/>
            <person name="Chiba Y."/>
            <person name="Ishida S."/>
            <person name="Ono Y."/>
            <person name="Takiguchi S."/>
            <person name="Watanabe S."/>
            <person name="Yosida M."/>
            <person name="Hotuta T."/>
            <person name="Kusano J."/>
            <person name="Kanehori K."/>
            <person name="Takahashi-Fujii A."/>
            <person name="Hara H."/>
            <person name="Tanase T.-O."/>
            <person name="Nomura Y."/>
            <person name="Togiya S."/>
            <person name="Komai F."/>
            <person name="Hara R."/>
            <person name="Takeuchi K."/>
            <person name="Arita M."/>
            <person name="Imose N."/>
            <person name="Musashino K."/>
            <person name="Yuuki H."/>
            <person name="Oshima A."/>
            <person name="Sasaki N."/>
            <person name="Aotsuka S."/>
            <person name="Yoshikawa Y."/>
            <person name="Matsunawa H."/>
            <person name="Ichihara T."/>
            <person name="Shiohata N."/>
            <person name="Sano S."/>
            <person name="Moriya S."/>
            <person name="Momiyama H."/>
            <person name="Satoh N."/>
            <person name="Takami S."/>
            <person name="Terashima Y."/>
            <person name="Suzuki O."/>
            <person name="Nakagawa S."/>
            <person name="Senoh A."/>
            <person name="Mizoguchi H."/>
            <person name="Goto Y."/>
            <person name="Shimizu F."/>
            <person name="Wakebe H."/>
            <person name="Hishigaki H."/>
            <person name="Watanabe T."/>
            <person name="Sugiyama A."/>
            <person name="Takemoto M."/>
            <person name="Kawakami B."/>
            <person name="Yamazaki M."/>
            <person name="Watanabe K."/>
            <person name="Kumagai A."/>
            <person name="Itakura S."/>
            <person name="Fukuzumi Y."/>
            <person name="Fujimori Y."/>
            <person name="Komiyama M."/>
            <person name="Tashiro H."/>
            <person name="Tanigami A."/>
            <person name="Fujiwara T."/>
            <person name="Ono T."/>
            <person name="Yamada K."/>
            <person name="Fujii Y."/>
            <person name="Ozaki K."/>
            <person name="Hirao M."/>
            <person name="Ohmori Y."/>
            <person name="Kawabata A."/>
            <person name="Hikiji T."/>
            <person name="Kobatake N."/>
            <person name="Inagaki H."/>
            <person name="Ikema Y."/>
            <person name="Okamoto S."/>
            <person name="Okitani R."/>
            <person name="Kawakami T."/>
            <person name="Noguchi S."/>
            <person name="Itoh T."/>
            <person name="Shigeta K."/>
            <person name="Senba T."/>
            <person name="Matsumura K."/>
            <person name="Nakajima Y."/>
            <person name="Mizuno T."/>
            <person name="Morinaga M."/>
            <person name="Sasaki M."/>
            <person name="Togashi T."/>
            <person name="Oyama M."/>
            <person name="Hata H."/>
            <person name="Watanabe M."/>
            <person name="Komatsu T."/>
            <person name="Mizushima-Sugano J."/>
            <person name="Satoh T."/>
            <person name="Shirai Y."/>
            <person name="Takahashi Y."/>
            <person name="Nakagawa K."/>
            <person name="Okumura K."/>
            <person name="Nagase T."/>
            <person name="Nomura N."/>
            <person name="Kikuchi H."/>
            <person name="Masuho Y."/>
            <person name="Yamashita R."/>
            <person name="Nakai K."/>
            <person name="Yada T."/>
            <person name="Nakamura Y."/>
            <person name="Ohara O."/>
            <person name="Isogai T."/>
            <person name="Sugano S."/>
        </authorList>
    </citation>
    <scope>NUCLEOTIDE SEQUENCE [LARGE SCALE MRNA] (ISOFORM 2)</scope>
    <source>
        <tissue>Amygdala</tissue>
    </source>
</reference>
<reference key="2">
    <citation type="journal article" date="2003" name="Nature">
        <title>The DNA sequence of human chromosome 7.</title>
        <authorList>
            <person name="Hillier L.W."/>
            <person name="Fulton R.S."/>
            <person name="Fulton L.A."/>
            <person name="Graves T.A."/>
            <person name="Pepin K.H."/>
            <person name="Wagner-McPherson C."/>
            <person name="Layman D."/>
            <person name="Maas J."/>
            <person name="Jaeger S."/>
            <person name="Walker R."/>
            <person name="Wylie K."/>
            <person name="Sekhon M."/>
            <person name="Becker M.C."/>
            <person name="O'Laughlin M.D."/>
            <person name="Schaller M.E."/>
            <person name="Fewell G.A."/>
            <person name="Delehaunty K.D."/>
            <person name="Miner T.L."/>
            <person name="Nash W.E."/>
            <person name="Cordes M."/>
            <person name="Du H."/>
            <person name="Sun H."/>
            <person name="Edwards J."/>
            <person name="Bradshaw-Cordum H."/>
            <person name="Ali J."/>
            <person name="Andrews S."/>
            <person name="Isak A."/>
            <person name="Vanbrunt A."/>
            <person name="Nguyen C."/>
            <person name="Du F."/>
            <person name="Lamar B."/>
            <person name="Courtney L."/>
            <person name="Kalicki J."/>
            <person name="Ozersky P."/>
            <person name="Bielicki L."/>
            <person name="Scott K."/>
            <person name="Holmes A."/>
            <person name="Harkins R."/>
            <person name="Harris A."/>
            <person name="Strong C.M."/>
            <person name="Hou S."/>
            <person name="Tomlinson C."/>
            <person name="Dauphin-Kohlberg S."/>
            <person name="Kozlowicz-Reilly A."/>
            <person name="Leonard S."/>
            <person name="Rohlfing T."/>
            <person name="Rock S.M."/>
            <person name="Tin-Wollam A.-M."/>
            <person name="Abbott A."/>
            <person name="Minx P."/>
            <person name="Maupin R."/>
            <person name="Strowmatt C."/>
            <person name="Latreille P."/>
            <person name="Miller N."/>
            <person name="Johnson D."/>
            <person name="Murray J."/>
            <person name="Woessner J.P."/>
            <person name="Wendl M.C."/>
            <person name="Yang S.-P."/>
            <person name="Schultz B.R."/>
            <person name="Wallis J.W."/>
            <person name="Spieth J."/>
            <person name="Bieri T.A."/>
            <person name="Nelson J.O."/>
            <person name="Berkowicz N."/>
            <person name="Wohldmann P.E."/>
            <person name="Cook L.L."/>
            <person name="Hickenbotham M.T."/>
            <person name="Eldred J."/>
            <person name="Williams D."/>
            <person name="Bedell J.A."/>
            <person name="Mardis E.R."/>
            <person name="Clifton S.W."/>
            <person name="Chissoe S.L."/>
            <person name="Marra M.A."/>
            <person name="Raymond C."/>
            <person name="Haugen E."/>
            <person name="Gillett W."/>
            <person name="Zhou Y."/>
            <person name="James R."/>
            <person name="Phelps K."/>
            <person name="Iadanoto S."/>
            <person name="Bubb K."/>
            <person name="Simms E."/>
            <person name="Levy R."/>
            <person name="Clendenning J."/>
            <person name="Kaul R."/>
            <person name="Kent W.J."/>
            <person name="Furey T.S."/>
            <person name="Baertsch R.A."/>
            <person name="Brent M.R."/>
            <person name="Keibler E."/>
            <person name="Flicek P."/>
            <person name="Bork P."/>
            <person name="Suyama M."/>
            <person name="Bailey J.A."/>
            <person name="Portnoy M.E."/>
            <person name="Torrents D."/>
            <person name="Chinwalla A.T."/>
            <person name="Gish W.R."/>
            <person name="Eddy S.R."/>
            <person name="McPherson J.D."/>
            <person name="Olson M.V."/>
            <person name="Eichler E.E."/>
            <person name="Green E.D."/>
            <person name="Waterston R.H."/>
            <person name="Wilson R.K."/>
        </authorList>
    </citation>
    <scope>NUCLEOTIDE SEQUENCE [LARGE SCALE GENOMIC DNA]</scope>
</reference>
<reference key="3">
    <citation type="journal article" date="2004" name="Genome Res.">
        <title>The status, quality, and expansion of the NIH full-length cDNA project: the Mammalian Gene Collection (MGC).</title>
        <authorList>
            <consortium name="The MGC Project Team"/>
        </authorList>
    </citation>
    <scope>NUCLEOTIDE SEQUENCE [LARGE SCALE MRNA] (ISOFORM 1)</scope>
    <source>
        <tissue>Brain</tissue>
        <tissue>Prostate</tissue>
    </source>
</reference>
<feature type="chain" id="PRO_0000281827" description="S-adenosyl-L-methionine-dependent tRNA 4-demethylwyosine synthase TYW1B">
    <location>
        <begin position="1"/>
        <end position="668"/>
    </location>
</feature>
<feature type="domain" description="Flavodoxin-like" evidence="3">
    <location>
        <begin position="37"/>
        <end position="191"/>
    </location>
</feature>
<feature type="domain" description="Radical SAM core" evidence="4">
    <location>
        <begin position="336"/>
        <end position="580"/>
    </location>
</feature>
<feature type="region of interest" description="Disordered" evidence="5">
    <location>
        <begin position="202"/>
        <end position="269"/>
    </location>
</feature>
<feature type="compositionally biased region" description="Basic and acidic residues" evidence="5">
    <location>
        <begin position="213"/>
        <end position="223"/>
    </location>
</feature>
<feature type="compositionally biased region" description="Basic and acidic residues" evidence="5">
    <location>
        <begin position="233"/>
        <end position="243"/>
    </location>
</feature>
<feature type="compositionally biased region" description="Acidic residues" evidence="5">
    <location>
        <begin position="244"/>
        <end position="255"/>
    </location>
</feature>
<feature type="binding site" evidence="3">
    <location>
        <begin position="43"/>
        <end position="47"/>
    </location>
    <ligand>
        <name>FMN</name>
        <dbReference type="ChEBI" id="CHEBI:58210"/>
    </ligand>
</feature>
<feature type="binding site" evidence="3">
    <location>
        <begin position="130"/>
        <end position="162"/>
    </location>
    <ligand>
        <name>FMN</name>
        <dbReference type="ChEBI" id="CHEBI:58210"/>
    </ligand>
</feature>
<feature type="binding site" evidence="2">
    <location>
        <position position="352"/>
    </location>
    <ligand>
        <name>[4Fe-4S] cluster</name>
        <dbReference type="ChEBI" id="CHEBI:49883"/>
        <note>4Fe-4S-S-AdoMet</note>
    </ligand>
</feature>
<feature type="binding site" evidence="2">
    <location>
        <position position="356"/>
    </location>
    <ligand>
        <name>[4Fe-4S] cluster</name>
        <dbReference type="ChEBI" id="CHEBI:49883"/>
        <note>4Fe-4S-S-AdoMet</note>
    </ligand>
</feature>
<feature type="binding site" evidence="2">
    <location>
        <position position="359"/>
    </location>
    <ligand>
        <name>[4Fe-4S] cluster</name>
        <dbReference type="ChEBI" id="CHEBI:49883"/>
        <note>4Fe-4S-S-AdoMet</note>
    </ligand>
</feature>
<feature type="splice variant" id="VSP_056092" description="In isoform 2." evidence="6">
    <location>
        <begin position="1"/>
        <end position="374"/>
    </location>
</feature>
<feature type="sequence conflict" description="In Ref. 3; AAH68520." evidence="7" ref="3">
    <original>M</original>
    <variation>T</variation>
    <location>
        <position position="511"/>
    </location>
</feature>
<organism>
    <name type="scientific">Homo sapiens</name>
    <name type="common">Human</name>
    <dbReference type="NCBI Taxonomy" id="9606"/>
    <lineage>
        <taxon>Eukaryota</taxon>
        <taxon>Metazoa</taxon>
        <taxon>Chordata</taxon>
        <taxon>Craniata</taxon>
        <taxon>Vertebrata</taxon>
        <taxon>Euteleostomi</taxon>
        <taxon>Mammalia</taxon>
        <taxon>Eutheria</taxon>
        <taxon>Euarchontoglires</taxon>
        <taxon>Primates</taxon>
        <taxon>Haplorrhini</taxon>
        <taxon>Catarrhini</taxon>
        <taxon>Hominidae</taxon>
        <taxon>Homo</taxon>
    </lineage>
</organism>
<accession>Q6NUM6</accession>
<accession>A0A087WZB2</accession>
<accession>A6NG09</accession>
<accession>B4DFY2</accession>
<accession>Q3KQX2</accession>
<evidence type="ECO:0000250" key="1"/>
<evidence type="ECO:0000255" key="2"/>
<evidence type="ECO:0000255" key="3">
    <source>
        <dbReference type="PROSITE-ProRule" id="PRU00088"/>
    </source>
</evidence>
<evidence type="ECO:0000255" key="4">
    <source>
        <dbReference type="PROSITE-ProRule" id="PRU01266"/>
    </source>
</evidence>
<evidence type="ECO:0000256" key="5">
    <source>
        <dbReference type="SAM" id="MobiDB-lite"/>
    </source>
</evidence>
<evidence type="ECO:0000303" key="6">
    <source>
    </source>
</evidence>
<evidence type="ECO:0000305" key="7"/>
<sequence length="668" mass="76946">MDPSADTWDLSSPLISLWINRFYIYLGFAVSISLWICVQIVIEMQGFATVLAEAVTSLDLPVAIINLKEYDPDDHLIEEVTSKNVCVFLVATYTDGLPTESAEWFCKWLEEASIDFRFGKTYLKGMRDAVFGLGNSAYASHFNKVGKNVDKWLWMLGVHRVMSRGEGDCDVVKSKHGSIEANFRAWKTKFISQLQALQKGERKKSCGGHCKKGKCESHQHGSEEREEGSQEQDELHHRDTKEEEPFESSSEEEFGGEDHQSLNSIVDVEDLGKIMDHVKKEKREKEQQEEKSGLFRNMGRNEDGERRAMITPALREALTKQVDAPRERSLLQTHILWNESHRCMETTPSLACANKCVFCWWHHNNPVGTEWLWKMDQPEMILKEAIENHQNMIKQFKGVPGVKAERFEEGMTVKHCALSLVGEPIMYPEINRFLKLLHQCKISSFLVTNAQFPAEIRNLEPVTQLYVSVDASTKDSLKKIDRPLFKDFWQQFLDSLKALAVKQQRTVYRLMLVKAWNVDELQAYAQLVSLGNPDFIEVKGVTYCRESSASSLTMAHVPWHEEVVQFVRELVDLIPEYEIACEHEHSNCLLIAHRKFKIGGEWWTWIDYNRFQELIQEYEDSGGSKTFSAKDYMARTPHWALFGANERSFDPKDTRHQRKNKSKAISGC</sequence>
<gene>
    <name type="primary">TYW1B</name>
    <name type="synonym">RSAFD2</name>
</gene>
<dbReference type="EC" id="4.1.3.44"/>
<dbReference type="EMBL" id="AK294319">
    <property type="protein sequence ID" value="BAG57593.1"/>
    <property type="molecule type" value="mRNA"/>
</dbReference>
<dbReference type="EMBL" id="AC091738">
    <property type="status" value="NOT_ANNOTATED_CDS"/>
    <property type="molecule type" value="Genomic_DNA"/>
</dbReference>
<dbReference type="EMBL" id="AC092536">
    <property type="status" value="NOT_ANNOTATED_CDS"/>
    <property type="molecule type" value="Genomic_DNA"/>
</dbReference>
<dbReference type="EMBL" id="AC211469">
    <property type="status" value="NOT_ANNOTATED_CDS"/>
    <property type="molecule type" value="Genomic_DNA"/>
</dbReference>
<dbReference type="EMBL" id="BC068520">
    <property type="protein sequence ID" value="AAH68520.1"/>
    <property type="molecule type" value="mRNA"/>
</dbReference>
<dbReference type="EMBL" id="BC106019">
    <property type="protein sequence ID" value="AAI06020.1"/>
    <property type="molecule type" value="mRNA"/>
</dbReference>
<dbReference type="CCDS" id="CCDS69309.1">
    <molecule id="Q6NUM6-1"/>
</dbReference>
<dbReference type="RefSeq" id="NP_001138912.2">
    <molecule id="Q6NUM6-1"/>
    <property type="nucleotide sequence ID" value="NM_001145440.3"/>
</dbReference>
<dbReference type="RefSeq" id="NP_001399111.1">
    <molecule id="Q6NUM6-2"/>
    <property type="nucleotide sequence ID" value="NM_001412182.1"/>
</dbReference>
<dbReference type="SMR" id="Q6NUM6"/>
<dbReference type="BioGRID" id="137301">
    <property type="interactions" value="26"/>
</dbReference>
<dbReference type="FunCoup" id="Q6NUM6">
    <property type="interactions" value="1136"/>
</dbReference>
<dbReference type="IntAct" id="Q6NUM6">
    <property type="interactions" value="18"/>
</dbReference>
<dbReference type="MINT" id="Q6NUM6"/>
<dbReference type="STRING" id="9606.ENSP00000482502"/>
<dbReference type="iPTMnet" id="Q6NUM6"/>
<dbReference type="PhosphoSitePlus" id="Q6NUM6"/>
<dbReference type="BioMuta" id="TYW1B"/>
<dbReference type="jPOST" id="Q6NUM6"/>
<dbReference type="MassIVE" id="Q6NUM6"/>
<dbReference type="PaxDb" id="9606-ENSP00000482502"/>
<dbReference type="PeptideAtlas" id="Q6NUM6"/>
<dbReference type="ProteomicsDB" id="66689">
    <molecule id="Q6NUM6-1"/>
</dbReference>
<dbReference type="Pumba" id="Q6NUM6"/>
<dbReference type="Antibodypedia" id="74447">
    <property type="antibodies" value="23 antibodies from 11 providers"/>
</dbReference>
<dbReference type="DNASU" id="441250"/>
<dbReference type="Ensembl" id="ENST00000620995.5">
    <molecule id="Q6NUM6-1"/>
    <property type="protein sequence ID" value="ENSP00000482502.1"/>
    <property type="gene ID" value="ENSG00000277149.5"/>
</dbReference>
<dbReference type="GeneID" id="441250"/>
<dbReference type="KEGG" id="hsa:441250"/>
<dbReference type="MANE-Select" id="ENST00000620995.5">
    <property type="protein sequence ID" value="ENSP00000482502.1"/>
    <property type="RefSeq nucleotide sequence ID" value="NM_001145440.3"/>
    <property type="RefSeq protein sequence ID" value="NP_001138912.2"/>
</dbReference>
<dbReference type="AGR" id="HGNC:33908"/>
<dbReference type="CTD" id="441250"/>
<dbReference type="DisGeNET" id="441250"/>
<dbReference type="GeneCards" id="TYW1B"/>
<dbReference type="HGNC" id="HGNC:33908">
    <property type="gene designation" value="TYW1B"/>
</dbReference>
<dbReference type="HPA" id="ENSG00000277149">
    <property type="expression patterns" value="Tissue enhanced (choroid)"/>
</dbReference>
<dbReference type="neXtProt" id="NX_Q6NUM6"/>
<dbReference type="OpenTargets" id="ENSG00000277149"/>
<dbReference type="PharmGKB" id="PA164727375"/>
<dbReference type="VEuPathDB" id="HostDB:ENSG00000277149"/>
<dbReference type="eggNOG" id="KOG1160">
    <property type="taxonomic scope" value="Eukaryota"/>
</dbReference>
<dbReference type="GeneTree" id="ENSGT00510000047059"/>
<dbReference type="InParanoid" id="Q6NUM6"/>
<dbReference type="OMA" id="RAFNEWC"/>
<dbReference type="OrthoDB" id="271553at2759"/>
<dbReference type="PAN-GO" id="Q6NUM6">
    <property type="GO annotations" value="1 GO annotation based on evolutionary models"/>
</dbReference>
<dbReference type="PathwayCommons" id="Q6NUM6"/>
<dbReference type="SignaLink" id="Q6NUM6"/>
<dbReference type="UniPathway" id="UPA00375"/>
<dbReference type="BioGRID-ORCS" id="441250">
    <property type="hits" value="22 hits in 1011 CRISPR screens"/>
</dbReference>
<dbReference type="ChiTaRS" id="TYW1B">
    <property type="organism name" value="human"/>
</dbReference>
<dbReference type="GenomeRNAi" id="441250"/>
<dbReference type="Pharos" id="Q6NUM6">
    <property type="development level" value="Tdark"/>
</dbReference>
<dbReference type="PRO" id="PR:Q6NUM6"/>
<dbReference type="Proteomes" id="UP000005640">
    <property type="component" value="Chromosome 7"/>
</dbReference>
<dbReference type="RNAct" id="Q6NUM6">
    <property type="molecule type" value="protein"/>
</dbReference>
<dbReference type="Bgee" id="ENSG00000277149">
    <property type="expression patterns" value="Expressed in sural nerve and 106 other cell types or tissues"/>
</dbReference>
<dbReference type="ExpressionAtlas" id="Q6NUM6">
    <property type="expression patterns" value="baseline and differential"/>
</dbReference>
<dbReference type="GO" id="GO:0051539">
    <property type="term" value="F:4 iron, 4 sulfur cluster binding"/>
    <property type="evidence" value="ECO:0007669"/>
    <property type="project" value="UniProtKB-KW"/>
</dbReference>
<dbReference type="GO" id="GO:0010181">
    <property type="term" value="F:FMN binding"/>
    <property type="evidence" value="ECO:0007669"/>
    <property type="project" value="InterPro"/>
</dbReference>
<dbReference type="GO" id="GO:0046872">
    <property type="term" value="F:metal ion binding"/>
    <property type="evidence" value="ECO:0007669"/>
    <property type="project" value="UniProtKB-KW"/>
</dbReference>
<dbReference type="GO" id="GO:0102521">
    <property type="term" value="F:tRNA-4-demethylwyosine synthase activity"/>
    <property type="evidence" value="ECO:0007669"/>
    <property type="project" value="UniProtKB-EC"/>
</dbReference>
<dbReference type="GO" id="GO:0031591">
    <property type="term" value="P:wybutosine biosynthetic process"/>
    <property type="evidence" value="ECO:0000318"/>
    <property type="project" value="GO_Central"/>
</dbReference>
<dbReference type="Gene3D" id="3.40.50.360">
    <property type="match status" value="1"/>
</dbReference>
<dbReference type="Gene3D" id="3.20.20.70">
    <property type="entry name" value="Aldolase class I"/>
    <property type="match status" value="1"/>
</dbReference>
<dbReference type="InterPro" id="IPR013785">
    <property type="entry name" value="Aldolase_TIM"/>
</dbReference>
<dbReference type="InterPro" id="IPR001094">
    <property type="entry name" value="Flavdoxin-like"/>
</dbReference>
<dbReference type="InterPro" id="IPR008254">
    <property type="entry name" value="Flavodoxin/NO_synth"/>
</dbReference>
<dbReference type="InterPro" id="IPR029039">
    <property type="entry name" value="Flavoprotein-like_sf"/>
</dbReference>
<dbReference type="InterPro" id="IPR007197">
    <property type="entry name" value="rSAM"/>
</dbReference>
<dbReference type="InterPro" id="IPR013917">
    <property type="entry name" value="tRNA_wybutosine-synth"/>
</dbReference>
<dbReference type="InterPro" id="IPR034556">
    <property type="entry name" value="tRNA_wybutosine-synthase"/>
</dbReference>
<dbReference type="PANTHER" id="PTHR13930">
    <property type="entry name" value="S-ADENOSYL-L-METHIONINE-DEPENDENT TRNA 4-DEMETHYLWYOSINE SYNTHASE"/>
    <property type="match status" value="1"/>
</dbReference>
<dbReference type="PANTHER" id="PTHR13930:SF0">
    <property type="entry name" value="S-ADENOSYL-L-METHIONINE-DEPENDENT TRNA 4-DEMETHYLWYOSINE SYNTHASE TYW1-RELATED"/>
    <property type="match status" value="1"/>
</dbReference>
<dbReference type="Pfam" id="PF00258">
    <property type="entry name" value="Flavodoxin_1"/>
    <property type="match status" value="1"/>
</dbReference>
<dbReference type="Pfam" id="PF04055">
    <property type="entry name" value="Radical_SAM"/>
    <property type="match status" value="1"/>
</dbReference>
<dbReference type="Pfam" id="PF08608">
    <property type="entry name" value="Wyosine_form"/>
    <property type="match status" value="1"/>
</dbReference>
<dbReference type="PRINTS" id="PR00369">
    <property type="entry name" value="FLAVODOXIN"/>
</dbReference>
<dbReference type="SFLD" id="SFLDS00029">
    <property type="entry name" value="Radical_SAM"/>
    <property type="match status" value="1"/>
</dbReference>
<dbReference type="SUPFAM" id="SSF52218">
    <property type="entry name" value="Flavoproteins"/>
    <property type="match status" value="1"/>
</dbReference>
<dbReference type="SUPFAM" id="SSF102114">
    <property type="entry name" value="Radical SAM enzymes"/>
    <property type="match status" value="1"/>
</dbReference>
<dbReference type="PROSITE" id="PS50902">
    <property type="entry name" value="FLAVODOXIN_LIKE"/>
    <property type="match status" value="1"/>
</dbReference>
<dbReference type="PROSITE" id="PS51918">
    <property type="entry name" value="RADICAL_SAM"/>
    <property type="match status" value="1"/>
</dbReference>
<keyword id="KW-0004">4Fe-4S</keyword>
<keyword id="KW-0025">Alternative splicing</keyword>
<keyword id="KW-0408">Iron</keyword>
<keyword id="KW-0411">Iron-sulfur</keyword>
<keyword id="KW-0456">Lyase</keyword>
<keyword id="KW-0479">Metal-binding</keyword>
<keyword id="KW-0547">Nucleotide-binding</keyword>
<keyword id="KW-1267">Proteomics identification</keyword>
<keyword id="KW-1185">Reference proteome</keyword>
<keyword id="KW-0949">S-adenosyl-L-methionine</keyword>
<keyword id="KW-0819">tRNA processing</keyword>
<protein>
    <recommendedName>
        <fullName>S-adenosyl-L-methionine-dependent tRNA 4-demethylwyosine synthase TYW1B</fullName>
        <ecNumber>4.1.3.44</ecNumber>
    </recommendedName>
    <alternativeName>
        <fullName>Radical S-adenosyl methionine and flavodoxin domain-containing protein 2</fullName>
    </alternativeName>
    <alternativeName>
        <fullName>tRNA wybutosine-synthesizing protein 1 homolog B</fullName>
    </alternativeName>
</protein>
<comment type="function">
    <text evidence="1">Probable component of the wybutosine biosynthesis pathway. Wybutosine is a hyper modified guanosine with a tricyclic base found at the 3'-position adjacent to the anticodon of eukaryotic phenylalanine tRNA. Catalyzes the condensation of N-methylguanine with 2 carbon atoms from pyruvate to form the tricyclic 4-demethylwyosine, an intermediate in wybutosine biosynthesis (By similarity).</text>
</comment>
<comment type="catalytic activity">
    <reaction>
        <text>N(1)-methylguanosine(37) in tRNA(Phe) + pyruvate + S-adenosyl-L-methionine = 4-demethylwyosine(37) in tRNA(Phe) + 5'-deoxyadenosine + L-methionine + CO2 + H2O</text>
        <dbReference type="Rhea" id="RHEA:36347"/>
        <dbReference type="Rhea" id="RHEA-COMP:10164"/>
        <dbReference type="Rhea" id="RHEA-COMP:10165"/>
        <dbReference type="ChEBI" id="CHEBI:15361"/>
        <dbReference type="ChEBI" id="CHEBI:15377"/>
        <dbReference type="ChEBI" id="CHEBI:16526"/>
        <dbReference type="ChEBI" id="CHEBI:17319"/>
        <dbReference type="ChEBI" id="CHEBI:57844"/>
        <dbReference type="ChEBI" id="CHEBI:59789"/>
        <dbReference type="ChEBI" id="CHEBI:64315"/>
        <dbReference type="ChEBI" id="CHEBI:73542"/>
        <dbReference type="EC" id="4.1.3.44"/>
    </reaction>
</comment>
<comment type="cofactor">
    <cofactor evidence="1">
        <name>[4Fe-4S] cluster</name>
        <dbReference type="ChEBI" id="CHEBI:49883"/>
    </cofactor>
    <text evidence="1">Binds 1 [4Fe-4S] cluster. The cluster is coordinated with 3 cysteines and an exchangeable S-adenosyl-L-methionine.</text>
</comment>
<comment type="pathway">
    <text>tRNA modification; wybutosine-tRNA(Phe) biosynthesis.</text>
</comment>
<comment type="interaction">
    <interactant intactId="EBI-12847032">
        <id>Q6NUM6</id>
    </interactant>
    <interactant intactId="EBI-12847034">
        <id>P59542</id>
        <label>TAS2R19</label>
    </interactant>
    <organismsDiffer>false</organismsDiffer>
    <experiments>3</experiments>
</comment>
<comment type="alternative products">
    <event type="alternative splicing"/>
    <isoform>
        <id>Q6NUM6-1</id>
        <name>1</name>
        <sequence type="displayed"/>
    </isoform>
    <isoform>
        <id>Q6NUM6-2</id>
        <name>2</name>
        <sequence type="described" ref="VSP_056092"/>
    </isoform>
</comment>
<comment type="similarity">
    <text evidence="7">Belongs to the TYW1 family.</text>
</comment>